<dbReference type="EMBL" id="Z97338">
    <property type="protein sequence ID" value="CAB10322.1"/>
    <property type="status" value="ALT_SEQ"/>
    <property type="molecule type" value="Genomic_DNA"/>
</dbReference>
<dbReference type="EMBL" id="AL161541">
    <property type="protein sequence ID" value="CAB78585.1"/>
    <property type="status" value="ALT_SEQ"/>
    <property type="molecule type" value="Genomic_DNA"/>
</dbReference>
<dbReference type="EMBL" id="CP002687">
    <property type="protein sequence ID" value="AEE83602.1"/>
    <property type="molecule type" value="Genomic_DNA"/>
</dbReference>
<dbReference type="EMBL" id="CP002687">
    <property type="protein sequence ID" value="AEE83603.1"/>
    <property type="molecule type" value="Genomic_DNA"/>
</dbReference>
<dbReference type="EMBL" id="AY064008">
    <property type="protein sequence ID" value="AAL36364.1"/>
    <property type="molecule type" value="mRNA"/>
</dbReference>
<dbReference type="PIR" id="H71418">
    <property type="entry name" value="H71418"/>
</dbReference>
<dbReference type="RefSeq" id="NP_001154237.1">
    <molecule id="Q8VZM5-2"/>
    <property type="nucleotide sequence ID" value="NM_001160765.2"/>
</dbReference>
<dbReference type="RefSeq" id="NP_193278.4">
    <molecule id="Q8VZM5-1"/>
    <property type="nucleotide sequence ID" value="NM_117632.5"/>
</dbReference>
<dbReference type="SMR" id="Q8VZM5"/>
<dbReference type="FunCoup" id="Q8VZM5">
    <property type="interactions" value="513"/>
</dbReference>
<dbReference type="STRING" id="3702.Q8VZM5"/>
<dbReference type="iPTMnet" id="Q8VZM5"/>
<dbReference type="PaxDb" id="3702-AT4G15430.1"/>
<dbReference type="ProteomicsDB" id="222767">
    <molecule id="Q8VZM5-1"/>
</dbReference>
<dbReference type="EnsemblPlants" id="AT4G15430.1">
    <molecule id="Q8VZM5-1"/>
    <property type="protein sequence ID" value="AT4G15430.1"/>
    <property type="gene ID" value="AT4G15430"/>
</dbReference>
<dbReference type="EnsemblPlants" id="AT4G15430.2">
    <molecule id="Q8VZM5-2"/>
    <property type="protein sequence ID" value="AT4G15430.2"/>
    <property type="gene ID" value="AT4G15430"/>
</dbReference>
<dbReference type="GeneID" id="827214"/>
<dbReference type="Gramene" id="AT4G15430.1">
    <molecule id="Q8VZM5-1"/>
    <property type="protein sequence ID" value="AT4G15430.1"/>
    <property type="gene ID" value="AT4G15430"/>
</dbReference>
<dbReference type="Gramene" id="AT4G15430.2">
    <molecule id="Q8VZM5-2"/>
    <property type="protein sequence ID" value="AT4G15430.2"/>
    <property type="gene ID" value="AT4G15430"/>
</dbReference>
<dbReference type="KEGG" id="ath:AT4G15430"/>
<dbReference type="Araport" id="AT4G15430"/>
<dbReference type="TAIR" id="AT4G15430"/>
<dbReference type="eggNOG" id="KOG1134">
    <property type="taxonomic scope" value="Eukaryota"/>
</dbReference>
<dbReference type="InParanoid" id="Q8VZM5"/>
<dbReference type="OMA" id="FRIWERS"/>
<dbReference type="PhylomeDB" id="Q8VZM5"/>
<dbReference type="PRO" id="PR:Q8VZM5"/>
<dbReference type="Proteomes" id="UP000006548">
    <property type="component" value="Chromosome 4"/>
</dbReference>
<dbReference type="ExpressionAtlas" id="Q8VZM5">
    <property type="expression patterns" value="baseline and differential"/>
</dbReference>
<dbReference type="GO" id="GO:0016020">
    <property type="term" value="C:membrane"/>
    <property type="evidence" value="ECO:0007669"/>
    <property type="project" value="UniProtKB-SubCell"/>
</dbReference>
<dbReference type="GO" id="GO:0005227">
    <property type="term" value="F:calcium-activated cation channel activity"/>
    <property type="evidence" value="ECO:0007669"/>
    <property type="project" value="InterPro"/>
</dbReference>
<dbReference type="InterPro" id="IPR045122">
    <property type="entry name" value="Csc1-like"/>
</dbReference>
<dbReference type="InterPro" id="IPR003864">
    <property type="entry name" value="CSC1/OSCA1-like_7TM"/>
</dbReference>
<dbReference type="InterPro" id="IPR027815">
    <property type="entry name" value="CSC1/OSCA1-like_cyt"/>
</dbReference>
<dbReference type="InterPro" id="IPR032880">
    <property type="entry name" value="Csc1/OSCA1-like_N"/>
</dbReference>
<dbReference type="PANTHER" id="PTHR13018:SF103">
    <property type="entry name" value="(RAPE) HYPOTHETICAL PROTEIN"/>
    <property type="match status" value="1"/>
</dbReference>
<dbReference type="PANTHER" id="PTHR13018">
    <property type="entry name" value="PROBABLE MEMBRANE PROTEIN DUF221-RELATED"/>
    <property type="match status" value="1"/>
</dbReference>
<dbReference type="Pfam" id="PF14703">
    <property type="entry name" value="PHM7_cyt"/>
    <property type="match status" value="1"/>
</dbReference>
<dbReference type="Pfam" id="PF02714">
    <property type="entry name" value="RSN1_7TM"/>
    <property type="match status" value="1"/>
</dbReference>
<dbReference type="Pfam" id="PF13967">
    <property type="entry name" value="RSN1_TM"/>
    <property type="match status" value="1"/>
</dbReference>
<accession>Q8VZM5</accession>
<accession>F4JK40</accession>
<accession>O23396</accession>
<proteinExistence type="evidence at transcript level"/>
<name>OSC16_ARATH</name>
<evidence type="ECO:0000250" key="1">
    <source>
        <dbReference type="UniProtKB" id="Q5XEZ5"/>
    </source>
</evidence>
<evidence type="ECO:0000255" key="2"/>
<evidence type="ECO:0000256" key="3">
    <source>
        <dbReference type="SAM" id="MobiDB-lite"/>
    </source>
</evidence>
<evidence type="ECO:0000303" key="4">
    <source>
    </source>
</evidence>
<evidence type="ECO:0000305" key="5"/>
<reference key="1">
    <citation type="journal article" date="1998" name="Nature">
        <title>Analysis of 1.9 Mb of contiguous sequence from chromosome 4 of Arabidopsis thaliana.</title>
        <authorList>
            <person name="Bevan M."/>
            <person name="Bancroft I."/>
            <person name="Bent E."/>
            <person name="Love K."/>
            <person name="Goodman H.M."/>
            <person name="Dean C."/>
            <person name="Bergkamp R."/>
            <person name="Dirkse W."/>
            <person name="van Staveren M."/>
            <person name="Stiekema W."/>
            <person name="Drost L."/>
            <person name="Ridley P."/>
            <person name="Hudson S.-A."/>
            <person name="Patel K."/>
            <person name="Murphy G."/>
            <person name="Piffanelli P."/>
            <person name="Wedler H."/>
            <person name="Wedler E."/>
            <person name="Wambutt R."/>
            <person name="Weitzenegger T."/>
            <person name="Pohl T."/>
            <person name="Terryn N."/>
            <person name="Gielen J."/>
            <person name="Villarroel R."/>
            <person name="De Clercq R."/>
            <person name="van Montagu M."/>
            <person name="Lecharny A."/>
            <person name="Aubourg S."/>
            <person name="Gy I."/>
            <person name="Kreis M."/>
            <person name="Lao N."/>
            <person name="Kavanagh T."/>
            <person name="Hempel S."/>
            <person name="Kotter P."/>
            <person name="Entian K.-D."/>
            <person name="Rieger M."/>
            <person name="Schaefer M."/>
            <person name="Funk B."/>
            <person name="Mueller-Auer S."/>
            <person name="Silvey M."/>
            <person name="James R."/>
            <person name="Monfort A."/>
            <person name="Pons A."/>
            <person name="Puigdomenech P."/>
            <person name="Douka A."/>
            <person name="Voukelatou E."/>
            <person name="Milioni D."/>
            <person name="Hatzopoulos P."/>
            <person name="Piravandi E."/>
            <person name="Obermaier B."/>
            <person name="Hilbert H."/>
            <person name="Duesterhoeft A."/>
            <person name="Moores T."/>
            <person name="Jones J.D.G."/>
            <person name="Eneva T."/>
            <person name="Palme K."/>
            <person name="Benes V."/>
            <person name="Rechmann S."/>
            <person name="Ansorge W."/>
            <person name="Cooke R."/>
            <person name="Berger C."/>
            <person name="Delseny M."/>
            <person name="Voet M."/>
            <person name="Volckaert G."/>
            <person name="Mewes H.-W."/>
            <person name="Klosterman S."/>
            <person name="Schueller C."/>
            <person name="Chalwatzis N."/>
        </authorList>
    </citation>
    <scope>NUCLEOTIDE SEQUENCE [LARGE SCALE GENOMIC DNA]</scope>
    <source>
        <strain>cv. Columbia</strain>
    </source>
</reference>
<reference key="2">
    <citation type="journal article" date="1999" name="Nature">
        <title>Sequence and analysis of chromosome 4 of the plant Arabidopsis thaliana.</title>
        <authorList>
            <person name="Mayer K.F.X."/>
            <person name="Schueller C."/>
            <person name="Wambutt R."/>
            <person name="Murphy G."/>
            <person name="Volckaert G."/>
            <person name="Pohl T."/>
            <person name="Duesterhoeft A."/>
            <person name="Stiekema W."/>
            <person name="Entian K.-D."/>
            <person name="Terryn N."/>
            <person name="Harris B."/>
            <person name="Ansorge W."/>
            <person name="Brandt P."/>
            <person name="Grivell L.A."/>
            <person name="Rieger M."/>
            <person name="Weichselgartner M."/>
            <person name="de Simone V."/>
            <person name="Obermaier B."/>
            <person name="Mache R."/>
            <person name="Mueller M."/>
            <person name="Kreis M."/>
            <person name="Delseny M."/>
            <person name="Puigdomenech P."/>
            <person name="Watson M."/>
            <person name="Schmidtheini T."/>
            <person name="Reichert B."/>
            <person name="Portetelle D."/>
            <person name="Perez-Alonso M."/>
            <person name="Boutry M."/>
            <person name="Bancroft I."/>
            <person name="Vos P."/>
            <person name="Hoheisel J."/>
            <person name="Zimmermann W."/>
            <person name="Wedler H."/>
            <person name="Ridley P."/>
            <person name="Langham S.-A."/>
            <person name="McCullagh B."/>
            <person name="Bilham L."/>
            <person name="Robben J."/>
            <person name="van der Schueren J."/>
            <person name="Grymonprez B."/>
            <person name="Chuang Y.-J."/>
            <person name="Vandenbussche F."/>
            <person name="Braeken M."/>
            <person name="Weltjens I."/>
            <person name="Voet M."/>
            <person name="Bastiaens I."/>
            <person name="Aert R."/>
            <person name="Defoor E."/>
            <person name="Weitzenegger T."/>
            <person name="Bothe G."/>
            <person name="Ramsperger U."/>
            <person name="Hilbert H."/>
            <person name="Braun M."/>
            <person name="Holzer E."/>
            <person name="Brandt A."/>
            <person name="Peters S."/>
            <person name="van Staveren M."/>
            <person name="Dirkse W."/>
            <person name="Mooijman P."/>
            <person name="Klein Lankhorst R."/>
            <person name="Rose M."/>
            <person name="Hauf J."/>
            <person name="Koetter P."/>
            <person name="Berneiser S."/>
            <person name="Hempel S."/>
            <person name="Feldpausch M."/>
            <person name="Lamberth S."/>
            <person name="Van den Daele H."/>
            <person name="De Keyser A."/>
            <person name="Buysshaert C."/>
            <person name="Gielen J."/>
            <person name="Villarroel R."/>
            <person name="De Clercq R."/>
            <person name="van Montagu M."/>
            <person name="Rogers J."/>
            <person name="Cronin A."/>
            <person name="Quail M.A."/>
            <person name="Bray-Allen S."/>
            <person name="Clark L."/>
            <person name="Doggett J."/>
            <person name="Hall S."/>
            <person name="Kay M."/>
            <person name="Lennard N."/>
            <person name="McLay K."/>
            <person name="Mayes R."/>
            <person name="Pettett A."/>
            <person name="Rajandream M.A."/>
            <person name="Lyne M."/>
            <person name="Benes V."/>
            <person name="Rechmann S."/>
            <person name="Borkova D."/>
            <person name="Bloecker H."/>
            <person name="Scharfe M."/>
            <person name="Grimm M."/>
            <person name="Loehnert T.-H."/>
            <person name="Dose S."/>
            <person name="de Haan M."/>
            <person name="Maarse A.C."/>
            <person name="Schaefer M."/>
            <person name="Mueller-Auer S."/>
            <person name="Gabel C."/>
            <person name="Fuchs M."/>
            <person name="Fartmann B."/>
            <person name="Granderath K."/>
            <person name="Dauner D."/>
            <person name="Herzl A."/>
            <person name="Neumann S."/>
            <person name="Argiriou A."/>
            <person name="Vitale D."/>
            <person name="Liguori R."/>
            <person name="Piravandi E."/>
            <person name="Massenet O."/>
            <person name="Quigley F."/>
            <person name="Clabauld G."/>
            <person name="Muendlein A."/>
            <person name="Felber R."/>
            <person name="Schnabl S."/>
            <person name="Hiller R."/>
            <person name="Schmidt W."/>
            <person name="Lecharny A."/>
            <person name="Aubourg S."/>
            <person name="Chefdor F."/>
            <person name="Cooke R."/>
            <person name="Berger C."/>
            <person name="Monfort A."/>
            <person name="Casacuberta E."/>
            <person name="Gibbons T."/>
            <person name="Weber N."/>
            <person name="Vandenbol M."/>
            <person name="Bargues M."/>
            <person name="Terol J."/>
            <person name="Torres A."/>
            <person name="Perez-Perez A."/>
            <person name="Purnelle B."/>
            <person name="Bent E."/>
            <person name="Johnson S."/>
            <person name="Tacon D."/>
            <person name="Jesse T."/>
            <person name="Heijnen L."/>
            <person name="Schwarz S."/>
            <person name="Scholler P."/>
            <person name="Heber S."/>
            <person name="Francs P."/>
            <person name="Bielke C."/>
            <person name="Frishman D."/>
            <person name="Haase D."/>
            <person name="Lemcke K."/>
            <person name="Mewes H.-W."/>
            <person name="Stocker S."/>
            <person name="Zaccaria P."/>
            <person name="Bevan M."/>
            <person name="Wilson R.K."/>
            <person name="de la Bastide M."/>
            <person name="Habermann K."/>
            <person name="Parnell L."/>
            <person name="Dedhia N."/>
            <person name="Gnoj L."/>
            <person name="Schutz K."/>
            <person name="Huang E."/>
            <person name="Spiegel L."/>
            <person name="Sekhon M."/>
            <person name="Murray J."/>
            <person name="Sheet P."/>
            <person name="Cordes M."/>
            <person name="Abu-Threideh J."/>
            <person name="Stoneking T."/>
            <person name="Kalicki J."/>
            <person name="Graves T."/>
            <person name="Harmon G."/>
            <person name="Edwards J."/>
            <person name="Latreille P."/>
            <person name="Courtney L."/>
            <person name="Cloud J."/>
            <person name="Abbott A."/>
            <person name="Scott K."/>
            <person name="Johnson D."/>
            <person name="Minx P."/>
            <person name="Bentley D."/>
            <person name="Fulton B."/>
            <person name="Miller N."/>
            <person name="Greco T."/>
            <person name="Kemp K."/>
            <person name="Kramer J."/>
            <person name="Fulton L."/>
            <person name="Mardis E."/>
            <person name="Dante M."/>
            <person name="Pepin K."/>
            <person name="Hillier L.W."/>
            <person name="Nelson J."/>
            <person name="Spieth J."/>
            <person name="Ryan E."/>
            <person name="Andrews S."/>
            <person name="Geisel C."/>
            <person name="Layman D."/>
            <person name="Du H."/>
            <person name="Ali J."/>
            <person name="Berghoff A."/>
            <person name="Jones K."/>
            <person name="Drone K."/>
            <person name="Cotton M."/>
            <person name="Joshu C."/>
            <person name="Antonoiu B."/>
            <person name="Zidanic M."/>
            <person name="Strong C."/>
            <person name="Sun H."/>
            <person name="Lamar B."/>
            <person name="Yordan C."/>
            <person name="Ma P."/>
            <person name="Zhong J."/>
            <person name="Preston R."/>
            <person name="Vil D."/>
            <person name="Shekher M."/>
            <person name="Matero A."/>
            <person name="Shah R."/>
            <person name="Swaby I.K."/>
            <person name="O'Shaughnessy A."/>
            <person name="Rodriguez M."/>
            <person name="Hoffman J."/>
            <person name="Till S."/>
            <person name="Granat S."/>
            <person name="Shohdy N."/>
            <person name="Hasegawa A."/>
            <person name="Hameed A."/>
            <person name="Lodhi M."/>
            <person name="Johnson A."/>
            <person name="Chen E."/>
            <person name="Marra M.A."/>
            <person name="Martienssen R."/>
            <person name="McCombie W.R."/>
        </authorList>
    </citation>
    <scope>NUCLEOTIDE SEQUENCE [LARGE SCALE GENOMIC DNA]</scope>
    <source>
        <strain>cv. Columbia</strain>
    </source>
</reference>
<reference key="3">
    <citation type="journal article" date="2017" name="Plant J.">
        <title>Araport11: a complete reannotation of the Arabidopsis thaliana reference genome.</title>
        <authorList>
            <person name="Cheng C.Y."/>
            <person name="Krishnakumar V."/>
            <person name="Chan A.P."/>
            <person name="Thibaud-Nissen F."/>
            <person name="Schobel S."/>
            <person name="Town C.D."/>
        </authorList>
    </citation>
    <scope>GENOME REANNOTATION</scope>
    <source>
        <strain>cv. Columbia</strain>
    </source>
</reference>
<reference key="4">
    <citation type="journal article" date="2003" name="Science">
        <title>Empirical analysis of transcriptional activity in the Arabidopsis genome.</title>
        <authorList>
            <person name="Yamada K."/>
            <person name="Lim J."/>
            <person name="Dale J.M."/>
            <person name="Chen H."/>
            <person name="Shinn P."/>
            <person name="Palm C.J."/>
            <person name="Southwick A.M."/>
            <person name="Wu H.C."/>
            <person name="Kim C.J."/>
            <person name="Nguyen M."/>
            <person name="Pham P.K."/>
            <person name="Cheuk R.F."/>
            <person name="Karlin-Newmann G."/>
            <person name="Liu S.X."/>
            <person name="Lam B."/>
            <person name="Sakano H."/>
            <person name="Wu T."/>
            <person name="Yu G."/>
            <person name="Miranda M."/>
            <person name="Quach H.L."/>
            <person name="Tripp M."/>
            <person name="Chang C.H."/>
            <person name="Lee J.M."/>
            <person name="Toriumi M.J."/>
            <person name="Chan M.M."/>
            <person name="Tang C.C."/>
            <person name="Onodera C.S."/>
            <person name="Deng J.M."/>
            <person name="Akiyama K."/>
            <person name="Ansari Y."/>
            <person name="Arakawa T."/>
            <person name="Banh J."/>
            <person name="Banno F."/>
            <person name="Bowser L."/>
            <person name="Brooks S.Y."/>
            <person name="Carninci P."/>
            <person name="Chao Q."/>
            <person name="Choy N."/>
            <person name="Enju A."/>
            <person name="Goldsmith A.D."/>
            <person name="Gurjal M."/>
            <person name="Hansen N.F."/>
            <person name="Hayashizaki Y."/>
            <person name="Johnson-Hopson C."/>
            <person name="Hsuan V.W."/>
            <person name="Iida K."/>
            <person name="Karnes M."/>
            <person name="Khan S."/>
            <person name="Koesema E."/>
            <person name="Ishida J."/>
            <person name="Jiang P.X."/>
            <person name="Jones T."/>
            <person name="Kawai J."/>
            <person name="Kamiya A."/>
            <person name="Meyers C."/>
            <person name="Nakajima M."/>
            <person name="Narusaka M."/>
            <person name="Seki M."/>
            <person name="Sakurai T."/>
            <person name="Satou M."/>
            <person name="Tamse R."/>
            <person name="Vaysberg M."/>
            <person name="Wallender E.K."/>
            <person name="Wong C."/>
            <person name="Yamamura Y."/>
            <person name="Yuan S."/>
            <person name="Shinozaki K."/>
            <person name="Davis R.W."/>
            <person name="Theologis A."/>
            <person name="Ecker J.R."/>
        </authorList>
    </citation>
    <scope>NUCLEOTIDE SEQUENCE [LARGE SCALE MRNA] (ISOFORM 1)</scope>
    <source>
        <strain>cv. Columbia</strain>
    </source>
</reference>
<reference key="5">
    <citation type="journal article" date="2014" name="Cell Res.">
        <title>DUF221 proteins are a family of osmosensitive calcium-permeable cation channels conserved across eukaryotes.</title>
        <authorList>
            <person name="Hou C."/>
            <person name="Tian W."/>
            <person name="Kleist T."/>
            <person name="He K."/>
            <person name="Garcia V."/>
            <person name="Bai F."/>
            <person name="Hao Y."/>
            <person name="Luan S."/>
            <person name="Li L."/>
        </authorList>
    </citation>
    <scope>GENE FAMILY</scope>
</reference>
<reference key="6">
    <citation type="journal article" date="2020" name="Nature">
        <title>The calcium-permeable channel OSCA1.3 regulates plant stomatal immunity.</title>
        <authorList>
            <person name="Thor K."/>
            <person name="Jiang S."/>
            <person name="Michard E."/>
            <person name="George J."/>
            <person name="Scherzer S."/>
            <person name="Huang S."/>
            <person name="Dindas J."/>
            <person name="Derbyshire P."/>
            <person name="Leitao N."/>
            <person name="DeFalco T.A."/>
            <person name="Koester P."/>
            <person name="Hunter K."/>
            <person name="Kimura S."/>
            <person name="Gronnier J."/>
            <person name="Stransfeld L."/>
            <person name="Kadota Y."/>
            <person name="Buecherl C.A."/>
            <person name="Charpentier M."/>
            <person name="Wrzaczek M."/>
            <person name="MacLean D."/>
            <person name="Oldroyd G.E.D."/>
            <person name="Menke F.L.H."/>
            <person name="Roelfsema M.R.G."/>
            <person name="Hedrich R."/>
            <person name="Feijo J."/>
            <person name="Zipfel C."/>
        </authorList>
    </citation>
    <scope>GENE FAMILY</scope>
</reference>
<keyword id="KW-0025">Alternative splicing</keyword>
<keyword id="KW-0106">Calcium</keyword>
<keyword id="KW-0407">Ion channel</keyword>
<keyword id="KW-0406">Ion transport</keyword>
<keyword id="KW-0472">Membrane</keyword>
<keyword id="KW-1185">Reference proteome</keyword>
<keyword id="KW-0812">Transmembrane</keyword>
<keyword id="KW-1133">Transmembrane helix</keyword>
<keyword id="KW-0813">Transport</keyword>
<organism>
    <name type="scientific">Arabidopsis thaliana</name>
    <name type="common">Mouse-ear cress</name>
    <dbReference type="NCBI Taxonomy" id="3702"/>
    <lineage>
        <taxon>Eukaryota</taxon>
        <taxon>Viridiplantae</taxon>
        <taxon>Streptophyta</taxon>
        <taxon>Embryophyta</taxon>
        <taxon>Tracheophyta</taxon>
        <taxon>Spermatophyta</taxon>
        <taxon>Magnoliopsida</taxon>
        <taxon>eudicotyledons</taxon>
        <taxon>Gunneridae</taxon>
        <taxon>Pentapetalae</taxon>
        <taxon>rosids</taxon>
        <taxon>malvids</taxon>
        <taxon>Brassicales</taxon>
        <taxon>Brassicaceae</taxon>
        <taxon>Camelineae</taxon>
        <taxon>Arabidopsis</taxon>
    </lineage>
</organism>
<gene>
    <name evidence="4" type="primary">OSCA1.6</name>
    <name type="ordered locus">At4g15430</name>
    <name type="ORF">dl3760w</name>
    <name type="ORF">FCAALL.292</name>
</gene>
<feature type="chain" id="PRO_0000429801" description="Hyperosmolality-gated Ca2+ permeable channel 1.6">
    <location>
        <begin position="1"/>
        <end position="761"/>
    </location>
</feature>
<feature type="transmembrane region" description="Helical" evidence="2">
    <location>
        <begin position="7"/>
        <end position="27"/>
    </location>
</feature>
<feature type="transmembrane region" description="Helical" evidence="2">
    <location>
        <begin position="101"/>
        <end position="121"/>
    </location>
</feature>
<feature type="transmembrane region" description="Helical" evidence="2">
    <location>
        <begin position="156"/>
        <end position="176"/>
    </location>
</feature>
<feature type="transmembrane region" description="Helical" evidence="2">
    <location>
        <begin position="375"/>
        <end position="395"/>
    </location>
</feature>
<feature type="transmembrane region" description="Helical" evidence="2">
    <location>
        <begin position="419"/>
        <end position="439"/>
    </location>
</feature>
<feature type="transmembrane region" description="Helical" evidence="2">
    <location>
        <begin position="467"/>
        <end position="487"/>
    </location>
</feature>
<feature type="transmembrane region" description="Helical" evidence="2">
    <location>
        <begin position="512"/>
        <end position="532"/>
    </location>
</feature>
<feature type="transmembrane region" description="Helical" evidence="2">
    <location>
        <begin position="583"/>
        <end position="603"/>
    </location>
</feature>
<feature type="transmembrane region" description="Helical" evidence="2">
    <location>
        <begin position="630"/>
        <end position="650"/>
    </location>
</feature>
<feature type="transmembrane region" description="Helical" evidence="2">
    <location>
        <begin position="653"/>
        <end position="673"/>
    </location>
</feature>
<feature type="region of interest" description="Disordered" evidence="3">
    <location>
        <begin position="718"/>
        <end position="761"/>
    </location>
</feature>
<feature type="compositionally biased region" description="Basic and acidic residues" evidence="3">
    <location>
        <begin position="718"/>
        <end position="731"/>
    </location>
</feature>
<feature type="splice variant" id="VSP_055298" description="In isoform 2." evidence="5">
    <location>
        <position position="685"/>
    </location>
</feature>
<sequence length="761" mass="87167">MATINDIGVAAAINIVTAFAFLLAFAIFRIQPVNDRVYFPKWYLKGLRSSSIQTGGFGSKFINLDFRSYIRFLNWMPEALKMPEPELVDHAGLDSVVYLRIYLLGLKIFFPIACVAFTTMVPVNWTNKGLDRLRHSNISFSDIDKLSLSNIPNGSPRFWVHLCMAYAITFWTCFILKREYQNIALMRLQFLANDQRRPNQFTVLVRNIPADPHESICELVEHFFKVNHPDHYLTFQAVHDATKLSELVLTRKQMQNLLDYNINKHMRNLSNRPVIKMGFLGCCGEEADGIKYYTSVVEGLTREISEEKQRLRTGTKSIVPAAFVSFKSRWGAAVCAQTQQTRNPTEWLTEWAAEPRDIYYDNLALPYVDLKIRRLIVGVAYFFLTFFFMIPIAFVQSLANIEGIEKAFPFLKPLIEVKLLKSIIQGFLPGIALKIFLLFLPRILMQMSKFEGFVSTSSLERRAATRFYMFQFINVFLGSIVTGTAFQQLNSFLNQSANDIPKTIGVSIPMKATFFITYIMVDGWAGVAGEILRLKPLIIYHLKNSFLVRTEKDREEATDPGTIGFNTGEPQIQLYFLLGLVYAAVSPILLPFILVFFGLAFVVYRHQVINVYNQKYESAGKFWPDVHRRVVTALVVSQLLLMGLLSTKHASKSTPLLLVLPLLTIGFHKHCKNRYQPAFVTYPLQQEAMIKDTLDRIREPNLNLKAFLRDAYAHPEFRVGEDPEPEEKLESDMSPPDLVATKRWSWRNTPLPSKDSCREIP</sequence>
<protein>
    <recommendedName>
        <fullName evidence="4">Hyperosmolality-gated Ca2+ permeable channel 1.6</fullName>
        <shortName evidence="4">AtOSCA1.6</shortName>
    </recommendedName>
</protein>
<comment type="function">
    <text evidence="1">Acts as an osmosensitive calcium-permeable cation channel.</text>
</comment>
<comment type="subcellular location">
    <subcellularLocation>
        <location evidence="5">Membrane</location>
        <topology evidence="5">Multi-pass membrane protein</topology>
    </subcellularLocation>
</comment>
<comment type="alternative products">
    <event type="alternative splicing"/>
    <isoform>
        <id>Q8VZM5-1</id>
        <name>1</name>
        <sequence type="displayed"/>
    </isoform>
    <isoform>
        <id>Q8VZM5-2</id>
        <name>2</name>
        <sequence type="described" ref="VSP_055298"/>
    </isoform>
</comment>
<comment type="similarity">
    <text evidence="5">Belongs to the CSC1 (TC 1.A.17) family.</text>
</comment>
<comment type="sequence caution" evidence="5">
    <conflict type="erroneous gene model prediction">
        <sequence resource="EMBL-CDS" id="CAB10322"/>
    </conflict>
</comment>
<comment type="sequence caution" evidence="5">
    <conflict type="erroneous gene model prediction">
        <sequence resource="EMBL-CDS" id="CAB78585"/>
    </conflict>
</comment>